<dbReference type="EC" id="3.5.2.7" evidence="1"/>
<dbReference type="EMBL" id="CP000888">
    <property type="protein sequence ID" value="ACD73801.1"/>
    <property type="molecule type" value="Genomic_DNA"/>
</dbReference>
<dbReference type="RefSeq" id="WP_002965718.1">
    <property type="nucleotide sequence ID" value="NC_010740.1"/>
</dbReference>
<dbReference type="SMR" id="B2SD97"/>
<dbReference type="GeneID" id="93015750"/>
<dbReference type="KEGG" id="bmc:BAbS19_II02900"/>
<dbReference type="HOGENOM" id="CLU_041647_0_0_5"/>
<dbReference type="UniPathway" id="UPA00379">
    <property type="reaction ID" value="UER00551"/>
</dbReference>
<dbReference type="Proteomes" id="UP000002565">
    <property type="component" value="Chromosome 2"/>
</dbReference>
<dbReference type="GO" id="GO:0005737">
    <property type="term" value="C:cytoplasm"/>
    <property type="evidence" value="ECO:0007669"/>
    <property type="project" value="UniProtKB-SubCell"/>
</dbReference>
<dbReference type="GO" id="GO:0050480">
    <property type="term" value="F:imidazolonepropionase activity"/>
    <property type="evidence" value="ECO:0007669"/>
    <property type="project" value="UniProtKB-UniRule"/>
</dbReference>
<dbReference type="GO" id="GO:0005506">
    <property type="term" value="F:iron ion binding"/>
    <property type="evidence" value="ECO:0007669"/>
    <property type="project" value="UniProtKB-UniRule"/>
</dbReference>
<dbReference type="GO" id="GO:0008270">
    <property type="term" value="F:zinc ion binding"/>
    <property type="evidence" value="ECO:0007669"/>
    <property type="project" value="UniProtKB-UniRule"/>
</dbReference>
<dbReference type="GO" id="GO:0019556">
    <property type="term" value="P:L-histidine catabolic process to glutamate and formamide"/>
    <property type="evidence" value="ECO:0007669"/>
    <property type="project" value="UniProtKB-UniPathway"/>
</dbReference>
<dbReference type="GO" id="GO:0019557">
    <property type="term" value="P:L-histidine catabolic process to glutamate and formate"/>
    <property type="evidence" value="ECO:0007669"/>
    <property type="project" value="UniProtKB-UniPathway"/>
</dbReference>
<dbReference type="CDD" id="cd01296">
    <property type="entry name" value="Imidazolone-5PH"/>
    <property type="match status" value="1"/>
</dbReference>
<dbReference type="FunFam" id="3.20.20.140:FF:000007">
    <property type="entry name" value="Imidazolonepropionase"/>
    <property type="match status" value="1"/>
</dbReference>
<dbReference type="Gene3D" id="3.20.20.140">
    <property type="entry name" value="Metal-dependent hydrolases"/>
    <property type="match status" value="1"/>
</dbReference>
<dbReference type="Gene3D" id="2.30.40.10">
    <property type="entry name" value="Urease, subunit C, domain 1"/>
    <property type="match status" value="1"/>
</dbReference>
<dbReference type="HAMAP" id="MF_00372">
    <property type="entry name" value="HutI"/>
    <property type="match status" value="1"/>
</dbReference>
<dbReference type="InterPro" id="IPR006680">
    <property type="entry name" value="Amidohydro-rel"/>
</dbReference>
<dbReference type="InterPro" id="IPR005920">
    <property type="entry name" value="HutI"/>
</dbReference>
<dbReference type="InterPro" id="IPR011059">
    <property type="entry name" value="Metal-dep_hydrolase_composite"/>
</dbReference>
<dbReference type="InterPro" id="IPR032466">
    <property type="entry name" value="Metal_Hydrolase"/>
</dbReference>
<dbReference type="NCBIfam" id="TIGR01224">
    <property type="entry name" value="hutI"/>
    <property type="match status" value="1"/>
</dbReference>
<dbReference type="PANTHER" id="PTHR42752">
    <property type="entry name" value="IMIDAZOLONEPROPIONASE"/>
    <property type="match status" value="1"/>
</dbReference>
<dbReference type="PANTHER" id="PTHR42752:SF1">
    <property type="entry name" value="IMIDAZOLONEPROPIONASE-RELATED"/>
    <property type="match status" value="1"/>
</dbReference>
<dbReference type="Pfam" id="PF01979">
    <property type="entry name" value="Amidohydro_1"/>
    <property type="match status" value="1"/>
</dbReference>
<dbReference type="SUPFAM" id="SSF51338">
    <property type="entry name" value="Composite domain of metallo-dependent hydrolases"/>
    <property type="match status" value="1"/>
</dbReference>
<dbReference type="SUPFAM" id="SSF51556">
    <property type="entry name" value="Metallo-dependent hydrolases"/>
    <property type="match status" value="1"/>
</dbReference>
<protein>
    <recommendedName>
        <fullName evidence="1">Imidazolonepropionase</fullName>
        <ecNumber evidence="1">3.5.2.7</ecNumber>
    </recommendedName>
    <alternativeName>
        <fullName evidence="1">Imidazolone-5-propionate hydrolase</fullName>
    </alternativeName>
</protein>
<comment type="function">
    <text evidence="1">Catalyzes the hydrolytic cleavage of the carbon-nitrogen bond in imidazolone-5-propanoate to yield N-formimidoyl-L-glutamate. It is the third step in the universal histidine degradation pathway.</text>
</comment>
<comment type="catalytic activity">
    <reaction evidence="1">
        <text>4-imidazolone-5-propanoate + H2O = N-formimidoyl-L-glutamate</text>
        <dbReference type="Rhea" id="RHEA:23660"/>
        <dbReference type="ChEBI" id="CHEBI:15377"/>
        <dbReference type="ChEBI" id="CHEBI:58928"/>
        <dbReference type="ChEBI" id="CHEBI:77893"/>
        <dbReference type="EC" id="3.5.2.7"/>
    </reaction>
</comment>
<comment type="cofactor">
    <cofactor evidence="1">
        <name>Zn(2+)</name>
        <dbReference type="ChEBI" id="CHEBI:29105"/>
    </cofactor>
    <cofactor evidence="1">
        <name>Fe(3+)</name>
        <dbReference type="ChEBI" id="CHEBI:29034"/>
    </cofactor>
    <text evidence="1">Binds 1 zinc or iron ion per subunit.</text>
</comment>
<comment type="pathway">
    <text evidence="1">Amino-acid degradation; L-histidine degradation into L-glutamate; N-formimidoyl-L-glutamate from L-histidine: step 3/3.</text>
</comment>
<comment type="subcellular location">
    <subcellularLocation>
        <location evidence="1">Cytoplasm</location>
    </subcellularLocation>
</comment>
<comment type="similarity">
    <text evidence="1">Belongs to the metallo-dependent hydrolases superfamily. HutI family.</text>
</comment>
<name>HUTI_BRUA1</name>
<organism>
    <name type="scientific">Brucella abortus (strain S19)</name>
    <dbReference type="NCBI Taxonomy" id="430066"/>
    <lineage>
        <taxon>Bacteria</taxon>
        <taxon>Pseudomonadati</taxon>
        <taxon>Pseudomonadota</taxon>
        <taxon>Alphaproteobacteria</taxon>
        <taxon>Hyphomicrobiales</taxon>
        <taxon>Brucellaceae</taxon>
        <taxon>Brucella/Ochrobactrum group</taxon>
        <taxon>Brucella</taxon>
    </lineage>
</organism>
<feature type="chain" id="PRO_1000121534" description="Imidazolonepropionase">
    <location>
        <begin position="1"/>
        <end position="405"/>
    </location>
</feature>
<feature type="binding site" evidence="1">
    <location>
        <position position="73"/>
    </location>
    <ligand>
        <name>Fe(3+)</name>
        <dbReference type="ChEBI" id="CHEBI:29034"/>
    </ligand>
</feature>
<feature type="binding site" evidence="1">
    <location>
        <position position="73"/>
    </location>
    <ligand>
        <name>Zn(2+)</name>
        <dbReference type="ChEBI" id="CHEBI:29105"/>
    </ligand>
</feature>
<feature type="binding site" evidence="1">
    <location>
        <position position="75"/>
    </location>
    <ligand>
        <name>Fe(3+)</name>
        <dbReference type="ChEBI" id="CHEBI:29034"/>
    </ligand>
</feature>
<feature type="binding site" evidence="1">
    <location>
        <position position="75"/>
    </location>
    <ligand>
        <name>Zn(2+)</name>
        <dbReference type="ChEBI" id="CHEBI:29105"/>
    </ligand>
</feature>
<feature type="binding site" evidence="1">
    <location>
        <position position="82"/>
    </location>
    <ligand>
        <name>4-imidazolone-5-propanoate</name>
        <dbReference type="ChEBI" id="CHEBI:77893"/>
    </ligand>
</feature>
<feature type="binding site" evidence="1">
    <location>
        <position position="145"/>
    </location>
    <ligand>
        <name>4-imidazolone-5-propanoate</name>
        <dbReference type="ChEBI" id="CHEBI:77893"/>
    </ligand>
</feature>
<feature type="binding site" evidence="1">
    <location>
        <position position="145"/>
    </location>
    <ligand>
        <name>N-formimidoyl-L-glutamate</name>
        <dbReference type="ChEBI" id="CHEBI:58928"/>
    </ligand>
</feature>
<feature type="binding site" evidence="1">
    <location>
        <position position="178"/>
    </location>
    <ligand>
        <name>4-imidazolone-5-propanoate</name>
        <dbReference type="ChEBI" id="CHEBI:77893"/>
    </ligand>
</feature>
<feature type="binding site" evidence="1">
    <location>
        <position position="243"/>
    </location>
    <ligand>
        <name>Fe(3+)</name>
        <dbReference type="ChEBI" id="CHEBI:29034"/>
    </ligand>
</feature>
<feature type="binding site" evidence="1">
    <location>
        <position position="243"/>
    </location>
    <ligand>
        <name>Zn(2+)</name>
        <dbReference type="ChEBI" id="CHEBI:29105"/>
    </ligand>
</feature>
<feature type="binding site" evidence="1">
    <location>
        <position position="246"/>
    </location>
    <ligand>
        <name>4-imidazolone-5-propanoate</name>
        <dbReference type="ChEBI" id="CHEBI:77893"/>
    </ligand>
</feature>
<feature type="binding site" evidence="1">
    <location>
        <position position="318"/>
    </location>
    <ligand>
        <name>Fe(3+)</name>
        <dbReference type="ChEBI" id="CHEBI:29034"/>
    </ligand>
</feature>
<feature type="binding site" evidence="1">
    <location>
        <position position="318"/>
    </location>
    <ligand>
        <name>Zn(2+)</name>
        <dbReference type="ChEBI" id="CHEBI:29105"/>
    </ligand>
</feature>
<feature type="binding site" evidence="1">
    <location>
        <position position="320"/>
    </location>
    <ligand>
        <name>N-formimidoyl-L-glutamate</name>
        <dbReference type="ChEBI" id="CHEBI:58928"/>
    </ligand>
</feature>
<feature type="binding site" evidence="1">
    <location>
        <position position="322"/>
    </location>
    <ligand>
        <name>N-formimidoyl-L-glutamate</name>
        <dbReference type="ChEBI" id="CHEBI:58928"/>
    </ligand>
</feature>
<feature type="binding site" evidence="1">
    <location>
        <position position="323"/>
    </location>
    <ligand>
        <name>4-imidazolone-5-propanoate</name>
        <dbReference type="ChEBI" id="CHEBI:77893"/>
    </ligand>
</feature>
<evidence type="ECO:0000255" key="1">
    <source>
        <dbReference type="HAMAP-Rule" id="MF_00372"/>
    </source>
</evidence>
<reference key="1">
    <citation type="journal article" date="2008" name="PLoS ONE">
        <title>Genome sequence of Brucella abortus vaccine strain S19 compared to virulent strains yields candidate virulence genes.</title>
        <authorList>
            <person name="Crasta O.R."/>
            <person name="Folkerts O."/>
            <person name="Fei Z."/>
            <person name="Mane S.P."/>
            <person name="Evans C."/>
            <person name="Martino-Catt S."/>
            <person name="Bricker B."/>
            <person name="Yu G."/>
            <person name="Du L."/>
            <person name="Sobral B.W."/>
        </authorList>
    </citation>
    <scope>NUCLEOTIDE SEQUENCE [LARGE SCALE GENOMIC DNA]</scope>
    <source>
        <strain>S19</strain>
    </source>
</reference>
<accession>B2SD97</accession>
<keyword id="KW-0963">Cytoplasm</keyword>
<keyword id="KW-0369">Histidine metabolism</keyword>
<keyword id="KW-0378">Hydrolase</keyword>
<keyword id="KW-0408">Iron</keyword>
<keyword id="KW-0479">Metal-binding</keyword>
<keyword id="KW-0862">Zinc</keyword>
<sequence>MTKNSSTVFTHARIATLEEKAANLGLIEEAALVVKDARIVYAGPENKLPDEYASFEKIDCGNRLITPGLIDCHTHLVHAGNRAHEFELRLQGATYEEVARAGGGIVSSVRNLRAASEDDLVRETLPRLDALIAEGVTTVEVKSGYGLDRDSEIKSLKAARRLGEERDVAIRTTFLGAHALPPEMNGDKAAYIDRVINDMLPAIAEQGLADAVDGFCEGIAFLPDEIARVFDAAKAHDIPVKLHADQLSNLHGAALAASYGALSADHLEYTDADGAAAMASAGTVAVLLPGAYYFIRETQKPPVEAFRAAGTKMALATDNNPGTSPLTSLLLTMNMGATLFRMTVEECIAGVTREAARALGILDQTGTLEIGKDADLAIWDIERPAELVYRIGFNPLWKRVFKGQI</sequence>
<proteinExistence type="inferred from homology"/>
<gene>
    <name evidence="1" type="primary">hutI</name>
    <name type="ordered locus">BAbS19_II02900</name>
</gene>